<dbReference type="EMBL" id="AY660566">
    <property type="protein sequence ID" value="AAT80696.1"/>
    <property type="molecule type" value="Genomic_DNA"/>
</dbReference>
<dbReference type="RefSeq" id="YP_209500.1">
    <property type="nucleotide sequence ID" value="NC_006861.1"/>
</dbReference>
<dbReference type="SMR" id="Q5SD22"/>
<dbReference type="GeneID" id="3283794"/>
<dbReference type="GO" id="GO:0009535">
    <property type="term" value="C:chloroplast thylakoid membrane"/>
    <property type="evidence" value="ECO:0007669"/>
    <property type="project" value="UniProtKB-SubCell"/>
</dbReference>
<dbReference type="GO" id="GO:0009523">
    <property type="term" value="C:photosystem II"/>
    <property type="evidence" value="ECO:0007669"/>
    <property type="project" value="UniProtKB-KW"/>
</dbReference>
<dbReference type="GO" id="GO:0042301">
    <property type="term" value="F:phosphate ion binding"/>
    <property type="evidence" value="ECO:0007669"/>
    <property type="project" value="InterPro"/>
</dbReference>
<dbReference type="GO" id="GO:0015979">
    <property type="term" value="P:photosynthesis"/>
    <property type="evidence" value="ECO:0007669"/>
    <property type="project" value="UniProtKB-UniRule"/>
</dbReference>
<dbReference type="GO" id="GO:0050821">
    <property type="term" value="P:protein stabilization"/>
    <property type="evidence" value="ECO:0007669"/>
    <property type="project" value="InterPro"/>
</dbReference>
<dbReference type="Gene3D" id="1.20.5.880">
    <property type="entry name" value="Photosystem II reaction center protein H"/>
    <property type="match status" value="1"/>
</dbReference>
<dbReference type="HAMAP" id="MF_00752">
    <property type="entry name" value="PSII_PsbH"/>
    <property type="match status" value="1"/>
</dbReference>
<dbReference type="InterPro" id="IPR001056">
    <property type="entry name" value="PSII_PsbH"/>
</dbReference>
<dbReference type="InterPro" id="IPR036863">
    <property type="entry name" value="PSII_PsbH_sf"/>
</dbReference>
<dbReference type="NCBIfam" id="NF002728">
    <property type="entry name" value="PRK02624.1"/>
    <property type="match status" value="1"/>
</dbReference>
<dbReference type="PANTHER" id="PTHR34469">
    <property type="entry name" value="PHOTOSYSTEM II REACTION CENTER PROTEIN H"/>
    <property type="match status" value="1"/>
</dbReference>
<dbReference type="PANTHER" id="PTHR34469:SF4">
    <property type="entry name" value="PHOTOSYSTEM II REACTION CENTER PROTEIN H"/>
    <property type="match status" value="1"/>
</dbReference>
<dbReference type="Pfam" id="PF00737">
    <property type="entry name" value="PsbH"/>
    <property type="match status" value="1"/>
</dbReference>
<dbReference type="SUPFAM" id="SSF161025">
    <property type="entry name" value="Photosystem II 10 kDa phosphoprotein PsbH"/>
    <property type="match status" value="1"/>
</dbReference>
<feature type="initiator methionine" description="Removed" evidence="1">
    <location>
        <position position="1"/>
    </location>
</feature>
<feature type="chain" id="PRO_0000070512" description="Photosystem II reaction center protein H">
    <location>
        <begin position="2"/>
        <end position="74"/>
    </location>
</feature>
<feature type="transmembrane region" description="Helical" evidence="2">
    <location>
        <begin position="41"/>
        <end position="61"/>
    </location>
</feature>
<feature type="modified residue" description="Phosphothreonine" evidence="2">
    <location>
        <position position="3"/>
    </location>
</feature>
<evidence type="ECO:0000250" key="1">
    <source>
        <dbReference type="UniProtKB" id="P56780"/>
    </source>
</evidence>
<evidence type="ECO:0000255" key="2">
    <source>
        <dbReference type="HAMAP-Rule" id="MF_00752"/>
    </source>
</evidence>
<name>PSBH_HUPLU</name>
<protein>
    <recommendedName>
        <fullName evidence="2">Photosystem II reaction center protein H</fullName>
        <shortName evidence="2">PSII-H</shortName>
    </recommendedName>
    <alternativeName>
        <fullName evidence="2">Photosystem II 10 kDa phosphoprotein</fullName>
    </alternativeName>
</protein>
<geneLocation type="chloroplast"/>
<keyword id="KW-0150">Chloroplast</keyword>
<keyword id="KW-0472">Membrane</keyword>
<keyword id="KW-0597">Phosphoprotein</keyword>
<keyword id="KW-0602">Photosynthesis</keyword>
<keyword id="KW-0604">Photosystem II</keyword>
<keyword id="KW-0934">Plastid</keyword>
<keyword id="KW-0793">Thylakoid</keyword>
<keyword id="KW-0812">Transmembrane</keyword>
<keyword id="KW-1133">Transmembrane helix</keyword>
<sequence length="74" mass="7831">MATQISDISRRTKVKSTGLGNALKPLNSEYGKVAPGWGTTPIMGVAMASFAVFSVIILELYNSSVSLDGIPVSW</sequence>
<proteinExistence type="inferred from homology"/>
<organism>
    <name type="scientific">Huperzia lucidula</name>
    <name type="common">Shining clubmoss</name>
    <name type="synonym">Lycopodium lucidulum</name>
    <dbReference type="NCBI Taxonomy" id="37429"/>
    <lineage>
        <taxon>Eukaryota</taxon>
        <taxon>Viridiplantae</taxon>
        <taxon>Streptophyta</taxon>
        <taxon>Embryophyta</taxon>
        <taxon>Tracheophyta</taxon>
        <taxon>Lycopodiopsida</taxon>
        <taxon>Lycopodiales</taxon>
        <taxon>Lycopodiaceae</taxon>
        <taxon>Huperzioideae</taxon>
        <taxon>Huperzia</taxon>
    </lineage>
</organism>
<reference key="1">
    <citation type="journal article" date="2005" name="Gene">
        <title>The first complete chloroplast genome sequence of a lycophyte, Huperzia lucidula (Lycopodiaceae).</title>
        <authorList>
            <person name="Wolf P.G."/>
            <person name="Karol K.G."/>
            <person name="Mandoli D.F."/>
            <person name="Kuehl J.V."/>
            <person name="Arumuganathan K."/>
            <person name="Ellis M.W."/>
            <person name="Mishler B.D."/>
            <person name="Kelch D.G."/>
            <person name="Olmstead R.G."/>
            <person name="Boore J.L."/>
        </authorList>
    </citation>
    <scope>NUCLEOTIDE SEQUENCE [LARGE SCALE GENOMIC DNA]</scope>
</reference>
<comment type="function">
    <text evidence="2">One of the components of the core complex of photosystem II (PSII), required for its stability and/or assembly. PSII is a light-driven water:plastoquinone oxidoreductase that uses light energy to abstract electrons from H(2)O, generating O(2) and a proton gradient subsequently used for ATP formation. It consists of a core antenna complex that captures photons, and an electron transfer chain that converts photonic excitation into a charge separation.</text>
</comment>
<comment type="subunit">
    <text evidence="2">PSII is composed of 1 copy each of membrane proteins PsbA, PsbB, PsbC, PsbD, PsbE, PsbF, PsbH, PsbI, PsbJ, PsbK, PsbL, PsbM, PsbT, PsbX, PsbY, PsbZ, Psb30/Ycf12, at least 3 peripheral proteins of the oxygen-evolving complex and a large number of cofactors. It forms dimeric complexes.</text>
</comment>
<comment type="subcellular location">
    <subcellularLocation>
        <location evidence="2">Plastid</location>
        <location evidence="2">Chloroplast thylakoid membrane</location>
        <topology evidence="2">Single-pass membrane protein</topology>
    </subcellularLocation>
</comment>
<comment type="PTM">
    <text evidence="2">Phosphorylation is a light-dependent reaction catalyzed by a membrane-bound kinase; phosphorylation occurs on Thr residue(s) in the N-terminus of the protein.</text>
</comment>
<comment type="similarity">
    <text evidence="2">Belongs to the PsbH family.</text>
</comment>
<accession>Q5SD22</accession>
<gene>
    <name evidence="2" type="primary">psbH</name>
</gene>